<accession>Q6MJM2</accession>
<proteinExistence type="inferred from homology"/>
<organism>
    <name type="scientific">Bdellovibrio bacteriovorus (strain ATCC 15356 / DSM 50701 / NCIMB 9529 / HD100)</name>
    <dbReference type="NCBI Taxonomy" id="264462"/>
    <lineage>
        <taxon>Bacteria</taxon>
        <taxon>Pseudomonadati</taxon>
        <taxon>Bdellovibrionota</taxon>
        <taxon>Bdellovibrionia</taxon>
        <taxon>Bdellovibrionales</taxon>
        <taxon>Pseudobdellovibrionaceae</taxon>
        <taxon>Bdellovibrio</taxon>
    </lineage>
</organism>
<reference key="1">
    <citation type="journal article" date="2004" name="Science">
        <title>A predator unmasked: life cycle of Bdellovibrio bacteriovorus from a genomic perspective.</title>
        <authorList>
            <person name="Rendulic S."/>
            <person name="Jagtap P."/>
            <person name="Rosinus A."/>
            <person name="Eppinger M."/>
            <person name="Baar C."/>
            <person name="Lanz C."/>
            <person name="Keller H."/>
            <person name="Lambert C."/>
            <person name="Evans K.J."/>
            <person name="Goesmann A."/>
            <person name="Meyer F."/>
            <person name="Sockett R.E."/>
            <person name="Schuster S.C."/>
        </authorList>
    </citation>
    <scope>NUCLEOTIDE SEQUENCE [LARGE SCALE GENOMIC DNA]</scope>
    <source>
        <strain>ATCC 15356 / DSM 50701 / NCIMB 9529 / HD100</strain>
    </source>
</reference>
<gene>
    <name evidence="1" type="primary">hutU</name>
    <name type="ordered locus">Bd2751</name>
</gene>
<dbReference type="EC" id="4.2.1.49" evidence="1"/>
<dbReference type="EMBL" id="BX842653">
    <property type="protein sequence ID" value="CAE80538.1"/>
    <property type="molecule type" value="Genomic_DNA"/>
</dbReference>
<dbReference type="SMR" id="Q6MJM2"/>
<dbReference type="STRING" id="264462.Bd2751"/>
<dbReference type="KEGG" id="bba:Bd2751"/>
<dbReference type="eggNOG" id="COG2987">
    <property type="taxonomic scope" value="Bacteria"/>
</dbReference>
<dbReference type="HOGENOM" id="CLU_018868_0_1_7"/>
<dbReference type="UniPathway" id="UPA00379">
    <property type="reaction ID" value="UER00550"/>
</dbReference>
<dbReference type="Proteomes" id="UP000008080">
    <property type="component" value="Chromosome"/>
</dbReference>
<dbReference type="GO" id="GO:0005737">
    <property type="term" value="C:cytoplasm"/>
    <property type="evidence" value="ECO:0007669"/>
    <property type="project" value="UniProtKB-SubCell"/>
</dbReference>
<dbReference type="GO" id="GO:0016153">
    <property type="term" value="F:urocanate hydratase activity"/>
    <property type="evidence" value="ECO:0007669"/>
    <property type="project" value="UniProtKB-UniRule"/>
</dbReference>
<dbReference type="GO" id="GO:0019556">
    <property type="term" value="P:L-histidine catabolic process to glutamate and formamide"/>
    <property type="evidence" value="ECO:0007669"/>
    <property type="project" value="UniProtKB-UniPathway"/>
</dbReference>
<dbReference type="GO" id="GO:0019557">
    <property type="term" value="P:L-histidine catabolic process to glutamate and formate"/>
    <property type="evidence" value="ECO:0007669"/>
    <property type="project" value="UniProtKB-UniPathway"/>
</dbReference>
<dbReference type="FunFam" id="3.40.50.10730:FF:000001">
    <property type="entry name" value="Urocanate hydratase"/>
    <property type="match status" value="1"/>
</dbReference>
<dbReference type="Gene3D" id="3.40.50.10730">
    <property type="entry name" value="Urocanase like domains"/>
    <property type="match status" value="1"/>
</dbReference>
<dbReference type="Gene3D" id="3.40.1770.10">
    <property type="entry name" value="Urocanase superfamily"/>
    <property type="match status" value="1"/>
</dbReference>
<dbReference type="HAMAP" id="MF_00577">
    <property type="entry name" value="HutU"/>
    <property type="match status" value="1"/>
</dbReference>
<dbReference type="InterPro" id="IPR055351">
    <property type="entry name" value="Urocanase"/>
</dbReference>
<dbReference type="InterPro" id="IPR023637">
    <property type="entry name" value="Urocanase-like"/>
</dbReference>
<dbReference type="InterPro" id="IPR035401">
    <property type="entry name" value="Urocanase_C"/>
</dbReference>
<dbReference type="InterPro" id="IPR038364">
    <property type="entry name" value="Urocanase_central_sf"/>
</dbReference>
<dbReference type="InterPro" id="IPR023636">
    <property type="entry name" value="Urocanase_CS"/>
</dbReference>
<dbReference type="InterPro" id="IPR035400">
    <property type="entry name" value="Urocanase_N"/>
</dbReference>
<dbReference type="InterPro" id="IPR035085">
    <property type="entry name" value="Urocanase_Rossmann-like"/>
</dbReference>
<dbReference type="InterPro" id="IPR036190">
    <property type="entry name" value="Urocanase_sf"/>
</dbReference>
<dbReference type="NCBIfam" id="TIGR01228">
    <property type="entry name" value="hutU"/>
    <property type="match status" value="1"/>
</dbReference>
<dbReference type="NCBIfam" id="NF003820">
    <property type="entry name" value="PRK05414.1"/>
    <property type="match status" value="1"/>
</dbReference>
<dbReference type="PANTHER" id="PTHR12216">
    <property type="entry name" value="UROCANATE HYDRATASE"/>
    <property type="match status" value="1"/>
</dbReference>
<dbReference type="PANTHER" id="PTHR12216:SF4">
    <property type="entry name" value="UROCANATE HYDRATASE"/>
    <property type="match status" value="1"/>
</dbReference>
<dbReference type="Pfam" id="PF01175">
    <property type="entry name" value="Urocanase"/>
    <property type="match status" value="1"/>
</dbReference>
<dbReference type="Pfam" id="PF17392">
    <property type="entry name" value="Urocanase_C"/>
    <property type="match status" value="1"/>
</dbReference>
<dbReference type="Pfam" id="PF17391">
    <property type="entry name" value="Urocanase_N"/>
    <property type="match status" value="1"/>
</dbReference>
<dbReference type="PIRSF" id="PIRSF001423">
    <property type="entry name" value="Urocanate_hydrat"/>
    <property type="match status" value="1"/>
</dbReference>
<dbReference type="SUPFAM" id="SSF111326">
    <property type="entry name" value="Urocanase"/>
    <property type="match status" value="1"/>
</dbReference>
<dbReference type="PROSITE" id="PS01233">
    <property type="entry name" value="UROCANASE"/>
    <property type="match status" value="1"/>
</dbReference>
<feature type="chain" id="PRO_1000025121" description="Urocanate hydratase">
    <location>
        <begin position="1"/>
        <end position="552"/>
    </location>
</feature>
<feature type="active site" evidence="1">
    <location>
        <position position="408"/>
    </location>
</feature>
<feature type="binding site" evidence="1">
    <location>
        <begin position="50"/>
        <end position="51"/>
    </location>
    <ligand>
        <name>NAD(+)</name>
        <dbReference type="ChEBI" id="CHEBI:57540"/>
    </ligand>
</feature>
<feature type="binding site" evidence="1">
    <location>
        <position position="128"/>
    </location>
    <ligand>
        <name>NAD(+)</name>
        <dbReference type="ChEBI" id="CHEBI:57540"/>
    </ligand>
</feature>
<feature type="binding site" evidence="1">
    <location>
        <begin position="174"/>
        <end position="176"/>
    </location>
    <ligand>
        <name>NAD(+)</name>
        <dbReference type="ChEBI" id="CHEBI:57540"/>
    </ligand>
</feature>
<feature type="binding site" evidence="1">
    <location>
        <position position="194"/>
    </location>
    <ligand>
        <name>NAD(+)</name>
        <dbReference type="ChEBI" id="CHEBI:57540"/>
    </ligand>
</feature>
<feature type="binding site" evidence="1">
    <location>
        <position position="199"/>
    </location>
    <ligand>
        <name>NAD(+)</name>
        <dbReference type="ChEBI" id="CHEBI:57540"/>
    </ligand>
</feature>
<feature type="binding site" evidence="1">
    <location>
        <begin position="261"/>
        <end position="265"/>
    </location>
    <ligand>
        <name>NAD(+)</name>
        <dbReference type="ChEBI" id="CHEBI:57540"/>
    </ligand>
</feature>
<feature type="binding site" evidence="1">
    <location>
        <begin position="271"/>
        <end position="272"/>
    </location>
    <ligand>
        <name>NAD(+)</name>
        <dbReference type="ChEBI" id="CHEBI:57540"/>
    </ligand>
</feature>
<feature type="binding site" evidence="1">
    <location>
        <position position="320"/>
    </location>
    <ligand>
        <name>NAD(+)</name>
        <dbReference type="ChEBI" id="CHEBI:57540"/>
    </ligand>
</feature>
<feature type="binding site" evidence="1">
    <location>
        <position position="490"/>
    </location>
    <ligand>
        <name>NAD(+)</name>
        <dbReference type="ChEBI" id="CHEBI:57540"/>
    </ligand>
</feature>
<keyword id="KW-0963">Cytoplasm</keyword>
<keyword id="KW-0369">Histidine metabolism</keyword>
<keyword id="KW-0456">Lyase</keyword>
<keyword id="KW-0520">NAD</keyword>
<keyword id="KW-1185">Reference proteome</keyword>
<sequence length="552" mass="60418">MGGNMSRVVKAPTGNKMVCKGWLQEAAYRMIQNNLDPVIAEHPENLVVYGGIGKAARNWESFDKILEALKELENDETLLVQSGKPIGILKTHEDAPRVLLANSNLVPKWATWEHFNELDKKGLMMYGQMTAGSWIYIGTQGIIQGTYESFVEAGRQHFGGNLTGRVILTAGLGGMGGAQPLAGVFAGACVLAVEIDPTRIQKRLETKYVDEVATDLDDALARIKKYTAAGEAKSIALQGNMATVIHQLIEKNFTPDLLTDQTSAHDPLVGYIPEGYTVETAKTFREQDQKAYLKAAYDSMAKHVRGMLAMKDRGAVTFDYGNNLRARAQEAGVENAFDYPGFVPAFIRPLFCKGSGPFRWVALSGDPNDIKVTDDAMRKLFPHKKDLLRWLDMAEERIAFQGLPARICWLEYGERAKAGLMFNQLVAEGKVKAPIVIGRDHLDCGSVASPNRETEAMKDGSDAVSDWALLNALVNTACGATWVSLHHGGGVGMGYSQHAGQVIVADGTEKAARRLERVLTADPAMGVFRHLDAGYELAHDIAKERGVRSLWL</sequence>
<protein>
    <recommendedName>
        <fullName evidence="1">Urocanate hydratase</fullName>
        <shortName evidence="1">Urocanase</shortName>
        <ecNumber evidence="1">4.2.1.49</ecNumber>
    </recommendedName>
    <alternativeName>
        <fullName evidence="1">Imidazolonepropionate hydrolase</fullName>
    </alternativeName>
</protein>
<evidence type="ECO:0000255" key="1">
    <source>
        <dbReference type="HAMAP-Rule" id="MF_00577"/>
    </source>
</evidence>
<name>HUTU_BDEBA</name>
<comment type="function">
    <text evidence="1">Catalyzes the conversion of urocanate to 4-imidazolone-5-propionate.</text>
</comment>
<comment type="catalytic activity">
    <reaction evidence="1">
        <text>4-imidazolone-5-propanoate = trans-urocanate + H2O</text>
        <dbReference type="Rhea" id="RHEA:13101"/>
        <dbReference type="ChEBI" id="CHEBI:15377"/>
        <dbReference type="ChEBI" id="CHEBI:17771"/>
        <dbReference type="ChEBI" id="CHEBI:77893"/>
        <dbReference type="EC" id="4.2.1.49"/>
    </reaction>
</comment>
<comment type="cofactor">
    <cofactor evidence="1">
        <name>NAD(+)</name>
        <dbReference type="ChEBI" id="CHEBI:57540"/>
    </cofactor>
    <text evidence="1">Binds 1 NAD(+) per subunit.</text>
</comment>
<comment type="pathway">
    <text evidence="1">Amino-acid degradation; L-histidine degradation into L-glutamate; N-formimidoyl-L-glutamate from L-histidine: step 2/3.</text>
</comment>
<comment type="subcellular location">
    <subcellularLocation>
        <location evidence="1">Cytoplasm</location>
    </subcellularLocation>
</comment>
<comment type="similarity">
    <text evidence="1">Belongs to the urocanase family.</text>
</comment>